<sequence length="180" mass="20226">MLTRKQKELLVEELSAIFEKSSLILFSDYKGLNVEQITKLRRKLREKLANGARYRVIKNSVAYLALKKAGYSVDEIEEVFSGPLAILYVEEGDPIEAIKIIYDFSKETKGLPSFKGLYLDGRFFDAEEVENLSKLPSKEQLLAMVVSGVQGPIRGFVNVLSGTLKSLLYALNAIKDKKSE</sequence>
<name>RL10_THEM4</name>
<organism>
    <name type="scientific">Thermosipho melanesiensis (strain DSM 12029 / CIP 104789 / BI429)</name>
    <dbReference type="NCBI Taxonomy" id="391009"/>
    <lineage>
        <taxon>Bacteria</taxon>
        <taxon>Thermotogati</taxon>
        <taxon>Thermotogota</taxon>
        <taxon>Thermotogae</taxon>
        <taxon>Thermotogales</taxon>
        <taxon>Fervidobacteriaceae</taxon>
        <taxon>Thermosipho</taxon>
    </lineage>
</organism>
<accession>A6LKC0</accession>
<dbReference type="EMBL" id="CP000716">
    <property type="protein sequence ID" value="ABR30371.1"/>
    <property type="molecule type" value="Genomic_DNA"/>
</dbReference>
<dbReference type="RefSeq" id="WP_012056732.1">
    <property type="nucleotide sequence ID" value="NC_009616.1"/>
</dbReference>
<dbReference type="SMR" id="A6LKC0"/>
<dbReference type="STRING" id="391009.Tmel_0504"/>
<dbReference type="KEGG" id="tme:Tmel_0504"/>
<dbReference type="eggNOG" id="COG0244">
    <property type="taxonomic scope" value="Bacteria"/>
</dbReference>
<dbReference type="HOGENOM" id="CLU_092227_1_2_0"/>
<dbReference type="OrthoDB" id="9808307at2"/>
<dbReference type="Proteomes" id="UP000001110">
    <property type="component" value="Chromosome"/>
</dbReference>
<dbReference type="GO" id="GO:0015934">
    <property type="term" value="C:large ribosomal subunit"/>
    <property type="evidence" value="ECO:0007669"/>
    <property type="project" value="InterPro"/>
</dbReference>
<dbReference type="GO" id="GO:0070180">
    <property type="term" value="F:large ribosomal subunit rRNA binding"/>
    <property type="evidence" value="ECO:0007669"/>
    <property type="project" value="UniProtKB-UniRule"/>
</dbReference>
<dbReference type="GO" id="GO:0003735">
    <property type="term" value="F:structural constituent of ribosome"/>
    <property type="evidence" value="ECO:0007669"/>
    <property type="project" value="InterPro"/>
</dbReference>
<dbReference type="GO" id="GO:0006412">
    <property type="term" value="P:translation"/>
    <property type="evidence" value="ECO:0007669"/>
    <property type="project" value="UniProtKB-UniRule"/>
</dbReference>
<dbReference type="CDD" id="cd05797">
    <property type="entry name" value="Ribosomal_L10"/>
    <property type="match status" value="1"/>
</dbReference>
<dbReference type="Gene3D" id="3.30.70.1730">
    <property type="match status" value="1"/>
</dbReference>
<dbReference type="Gene3D" id="6.10.250.290">
    <property type="match status" value="1"/>
</dbReference>
<dbReference type="HAMAP" id="MF_00362">
    <property type="entry name" value="Ribosomal_uL10"/>
    <property type="match status" value="1"/>
</dbReference>
<dbReference type="InterPro" id="IPR001790">
    <property type="entry name" value="Ribosomal_uL10"/>
</dbReference>
<dbReference type="InterPro" id="IPR043141">
    <property type="entry name" value="Ribosomal_uL10-like_sf"/>
</dbReference>
<dbReference type="InterPro" id="IPR022973">
    <property type="entry name" value="Ribosomal_uL10_bac"/>
</dbReference>
<dbReference type="InterPro" id="IPR047865">
    <property type="entry name" value="Ribosomal_uL10_bac_type"/>
</dbReference>
<dbReference type="InterPro" id="IPR002363">
    <property type="entry name" value="Ribosomal_uL10_CS_bac"/>
</dbReference>
<dbReference type="NCBIfam" id="NF000955">
    <property type="entry name" value="PRK00099.1-1"/>
    <property type="match status" value="1"/>
</dbReference>
<dbReference type="PANTHER" id="PTHR11560">
    <property type="entry name" value="39S RIBOSOMAL PROTEIN L10, MITOCHONDRIAL"/>
    <property type="match status" value="1"/>
</dbReference>
<dbReference type="Pfam" id="PF00466">
    <property type="entry name" value="Ribosomal_L10"/>
    <property type="match status" value="1"/>
</dbReference>
<dbReference type="SUPFAM" id="SSF160369">
    <property type="entry name" value="Ribosomal protein L10-like"/>
    <property type="match status" value="1"/>
</dbReference>
<dbReference type="PROSITE" id="PS01109">
    <property type="entry name" value="RIBOSOMAL_L10"/>
    <property type="match status" value="1"/>
</dbReference>
<protein>
    <recommendedName>
        <fullName evidence="1">Large ribosomal subunit protein uL10</fullName>
    </recommendedName>
    <alternativeName>
        <fullName evidence="2">50S ribosomal protein L10</fullName>
    </alternativeName>
</protein>
<evidence type="ECO:0000255" key="1">
    <source>
        <dbReference type="HAMAP-Rule" id="MF_00362"/>
    </source>
</evidence>
<evidence type="ECO:0000305" key="2"/>
<reference key="1">
    <citation type="submission" date="2007-05" db="EMBL/GenBank/DDBJ databases">
        <title>Complete sequence of Thermosipho melanesiensis BI429.</title>
        <authorList>
            <consortium name="US DOE Joint Genome Institute"/>
            <person name="Copeland A."/>
            <person name="Lucas S."/>
            <person name="Lapidus A."/>
            <person name="Barry K."/>
            <person name="Glavina del Rio T."/>
            <person name="Dalin E."/>
            <person name="Tice H."/>
            <person name="Pitluck S."/>
            <person name="Chertkov O."/>
            <person name="Brettin T."/>
            <person name="Bruce D."/>
            <person name="Detter J.C."/>
            <person name="Han C."/>
            <person name="Schmutz J."/>
            <person name="Larimer F."/>
            <person name="Land M."/>
            <person name="Hauser L."/>
            <person name="Kyrpides N."/>
            <person name="Mikhailova N."/>
            <person name="Nelson K."/>
            <person name="Gogarten J.P."/>
            <person name="Noll K."/>
            <person name="Richardson P."/>
        </authorList>
    </citation>
    <scope>NUCLEOTIDE SEQUENCE [LARGE SCALE GENOMIC DNA]</scope>
    <source>
        <strain>DSM 12029 / CIP 104789 / BI429</strain>
    </source>
</reference>
<proteinExistence type="inferred from homology"/>
<keyword id="KW-0687">Ribonucleoprotein</keyword>
<keyword id="KW-0689">Ribosomal protein</keyword>
<keyword id="KW-0694">RNA-binding</keyword>
<keyword id="KW-0699">rRNA-binding</keyword>
<comment type="function">
    <text evidence="1">Forms part of the ribosomal stalk, playing a central role in the interaction of the ribosome with GTP-bound translation factors.</text>
</comment>
<comment type="subunit">
    <text evidence="1">Part of the ribosomal stalk of the 50S ribosomal subunit. The N-terminus interacts with L11 and the large rRNA to form the base of the stalk. The C-terminus forms an elongated spine to which L12 dimers bind in a sequential fashion forming a multimeric L10(L12)X complex.</text>
</comment>
<comment type="similarity">
    <text evidence="1">Belongs to the universal ribosomal protein uL10 family.</text>
</comment>
<feature type="chain" id="PRO_1000005613" description="Large ribosomal subunit protein uL10">
    <location>
        <begin position="1"/>
        <end position="180"/>
    </location>
</feature>
<gene>
    <name evidence="1" type="primary">rplJ</name>
    <name type="ordered locus">Tmel_0504</name>
</gene>